<comment type="function">
    <text evidence="1">DNA ligase that catalyzes the formation of phosphodiester linkages between 5'-phosphoryl and 3'-hydroxyl groups in double-stranded DNA using NAD as a coenzyme and as the energy source for the reaction. It is essential for DNA replication and repair of damaged DNA.</text>
</comment>
<comment type="catalytic activity">
    <reaction evidence="1">
        <text>NAD(+) + (deoxyribonucleotide)n-3'-hydroxyl + 5'-phospho-(deoxyribonucleotide)m = (deoxyribonucleotide)n+m + AMP + beta-nicotinamide D-nucleotide.</text>
        <dbReference type="EC" id="6.5.1.2"/>
    </reaction>
</comment>
<comment type="cofactor">
    <cofactor evidence="1">
        <name>Mg(2+)</name>
        <dbReference type="ChEBI" id="CHEBI:18420"/>
    </cofactor>
    <cofactor evidence="1">
        <name>Mn(2+)</name>
        <dbReference type="ChEBI" id="CHEBI:29035"/>
    </cofactor>
</comment>
<comment type="similarity">
    <text evidence="1">Belongs to the NAD-dependent DNA ligase family. LigA subfamily.</text>
</comment>
<sequence>MGAVSRDDYIALCTELVEHDRRYYVLNQPTISDYSYDVKMRELQEIEVQHPEWKVSWSPTMYLGDRPSGQFPVVPHSSPMLSIANVYSLQELEEFFSRTEKLLGYSPGYSLELKIDGIAVAIRYEKRLFAQALSRGNGVKGEDITANVSTIRSLPMRLPQEAPEDLEVRGEVFLSYEAFEELNACQREQGKLEFANPRNAAGGTLKLLSSKEAAKRKLDLSVYGLITDQKKRSHFENLQLCSQWGFFVAGMPKQCRSRQDVVERIREIEEMRAALPMAIDGVVIKVDNIAYQDRLGLTSKHYRWAIAYKYAPERAETILEDIVVQVGKTGILTPVAELAPVFLSGSRVSRASLYNQDEIEKKDIRIGDSVYVEKGGEVIPKIVGINLAKRSLESEPWKMPSLCPVCHEPVVKEKVSVRCVNPLCSGGMLEKICFFASKSALNIDHLGEKVVTKLFEVGLISSCSDIFALAEEDLKQVPGFKDRSIQNLLASIAGAKKVALDRLLTALSIPFVGSSGAIALADHFGTLDKVIEASLDELMSIEGIGPKVAASIVAFFSKHENREEIRRMQELGVQVLSKQSDKEAPLQGKVFVLTGTLQQMTRTQAEERIRCLGGKVSSSVSKSTYAVIAGSEAGGKLKKAQDLGLSIWNESELLRILDAKSVS</sequence>
<protein>
    <recommendedName>
        <fullName evidence="1">DNA ligase</fullName>
        <ecNumber evidence="1">6.5.1.2</ecNumber>
    </recommendedName>
    <alternativeName>
        <fullName evidence="1">Polydeoxyribonucleotide synthase [NAD(+)]</fullName>
    </alternativeName>
</protein>
<proteinExistence type="inferred from homology"/>
<dbReference type="EC" id="6.5.1.2" evidence="1"/>
<dbReference type="EMBL" id="AE001273">
    <property type="protein sequence ID" value="AAC67737.1"/>
    <property type="molecule type" value="Genomic_DNA"/>
</dbReference>
<dbReference type="PIR" id="C71551">
    <property type="entry name" value="C71551"/>
</dbReference>
<dbReference type="RefSeq" id="WP_010725092.1">
    <property type="nucleotide sequence ID" value="NC_000117.1"/>
</dbReference>
<dbReference type="SMR" id="O84148"/>
<dbReference type="FunCoup" id="O84148">
    <property type="interactions" value="187"/>
</dbReference>
<dbReference type="STRING" id="272561.CT_146"/>
<dbReference type="EnsemblBacteria" id="AAC67737">
    <property type="protein sequence ID" value="AAC67737"/>
    <property type="gene ID" value="CT_146"/>
</dbReference>
<dbReference type="KEGG" id="ctr:CT_146"/>
<dbReference type="PATRIC" id="fig|272561.5.peg.159"/>
<dbReference type="HOGENOM" id="CLU_007764_2_1_0"/>
<dbReference type="InParanoid" id="O84148"/>
<dbReference type="OrthoDB" id="9759736at2"/>
<dbReference type="Proteomes" id="UP000000431">
    <property type="component" value="Chromosome"/>
</dbReference>
<dbReference type="GO" id="GO:0005829">
    <property type="term" value="C:cytosol"/>
    <property type="evidence" value="ECO:0000318"/>
    <property type="project" value="GO_Central"/>
</dbReference>
<dbReference type="GO" id="GO:0003677">
    <property type="term" value="F:DNA binding"/>
    <property type="evidence" value="ECO:0007669"/>
    <property type="project" value="InterPro"/>
</dbReference>
<dbReference type="GO" id="GO:0003911">
    <property type="term" value="F:DNA ligase (NAD+) activity"/>
    <property type="evidence" value="ECO:0000318"/>
    <property type="project" value="GO_Central"/>
</dbReference>
<dbReference type="GO" id="GO:0046872">
    <property type="term" value="F:metal ion binding"/>
    <property type="evidence" value="ECO:0007669"/>
    <property type="project" value="UniProtKB-KW"/>
</dbReference>
<dbReference type="GO" id="GO:0006281">
    <property type="term" value="P:DNA repair"/>
    <property type="evidence" value="ECO:0007669"/>
    <property type="project" value="UniProtKB-KW"/>
</dbReference>
<dbReference type="GO" id="GO:0006260">
    <property type="term" value="P:DNA replication"/>
    <property type="evidence" value="ECO:0007669"/>
    <property type="project" value="UniProtKB-KW"/>
</dbReference>
<dbReference type="CDD" id="cd17748">
    <property type="entry name" value="BRCT_DNA_ligase_like"/>
    <property type="match status" value="1"/>
</dbReference>
<dbReference type="CDD" id="cd00114">
    <property type="entry name" value="LIGANc"/>
    <property type="match status" value="1"/>
</dbReference>
<dbReference type="FunFam" id="1.10.150.20:FF:000006">
    <property type="entry name" value="DNA ligase"/>
    <property type="match status" value="1"/>
</dbReference>
<dbReference type="FunFam" id="1.10.287.610:FF:000012">
    <property type="entry name" value="DNA ligase"/>
    <property type="match status" value="1"/>
</dbReference>
<dbReference type="FunFam" id="2.40.50.140:FF:000012">
    <property type="entry name" value="DNA ligase"/>
    <property type="match status" value="1"/>
</dbReference>
<dbReference type="FunFam" id="3.30.470.30:FF:000041">
    <property type="entry name" value="DNA ligase"/>
    <property type="match status" value="1"/>
</dbReference>
<dbReference type="Gene3D" id="6.20.10.30">
    <property type="match status" value="1"/>
</dbReference>
<dbReference type="Gene3D" id="1.10.150.20">
    <property type="entry name" value="5' to 3' exonuclease, C-terminal subdomain"/>
    <property type="match status" value="2"/>
</dbReference>
<dbReference type="Gene3D" id="3.40.50.10190">
    <property type="entry name" value="BRCT domain"/>
    <property type="match status" value="1"/>
</dbReference>
<dbReference type="Gene3D" id="3.30.470.30">
    <property type="entry name" value="DNA ligase/mRNA capping enzyme"/>
    <property type="match status" value="1"/>
</dbReference>
<dbReference type="Gene3D" id="1.10.287.610">
    <property type="entry name" value="Helix hairpin bin"/>
    <property type="match status" value="1"/>
</dbReference>
<dbReference type="Gene3D" id="2.40.50.140">
    <property type="entry name" value="Nucleic acid-binding proteins"/>
    <property type="match status" value="1"/>
</dbReference>
<dbReference type="HAMAP" id="MF_01588">
    <property type="entry name" value="DNA_ligase_A"/>
    <property type="match status" value="1"/>
</dbReference>
<dbReference type="InterPro" id="IPR001357">
    <property type="entry name" value="BRCT_dom"/>
</dbReference>
<dbReference type="InterPro" id="IPR036420">
    <property type="entry name" value="BRCT_dom_sf"/>
</dbReference>
<dbReference type="InterPro" id="IPR041663">
    <property type="entry name" value="DisA/LigA_HHH"/>
</dbReference>
<dbReference type="InterPro" id="IPR001679">
    <property type="entry name" value="DNA_ligase"/>
</dbReference>
<dbReference type="InterPro" id="IPR018239">
    <property type="entry name" value="DNA_ligase_AS"/>
</dbReference>
<dbReference type="InterPro" id="IPR033136">
    <property type="entry name" value="DNA_ligase_CS"/>
</dbReference>
<dbReference type="InterPro" id="IPR013839">
    <property type="entry name" value="DNAligase_adenylation"/>
</dbReference>
<dbReference type="InterPro" id="IPR013840">
    <property type="entry name" value="DNAligase_N"/>
</dbReference>
<dbReference type="InterPro" id="IPR003583">
    <property type="entry name" value="Hlx-hairpin-Hlx_DNA-bd_motif"/>
</dbReference>
<dbReference type="InterPro" id="IPR012340">
    <property type="entry name" value="NA-bd_OB-fold"/>
</dbReference>
<dbReference type="InterPro" id="IPR004150">
    <property type="entry name" value="NAD_DNA_ligase_OB"/>
</dbReference>
<dbReference type="InterPro" id="IPR010994">
    <property type="entry name" value="RuvA_2-like"/>
</dbReference>
<dbReference type="NCBIfam" id="TIGR00575">
    <property type="entry name" value="dnlj"/>
    <property type="match status" value="1"/>
</dbReference>
<dbReference type="NCBIfam" id="NF005932">
    <property type="entry name" value="PRK07956.1"/>
    <property type="match status" value="1"/>
</dbReference>
<dbReference type="PANTHER" id="PTHR23389">
    <property type="entry name" value="CHROMOSOME TRANSMISSION FIDELITY FACTOR 18"/>
    <property type="match status" value="1"/>
</dbReference>
<dbReference type="PANTHER" id="PTHR23389:SF9">
    <property type="entry name" value="DNA LIGASE"/>
    <property type="match status" value="1"/>
</dbReference>
<dbReference type="Pfam" id="PF00533">
    <property type="entry name" value="BRCT"/>
    <property type="match status" value="1"/>
</dbReference>
<dbReference type="Pfam" id="PF01653">
    <property type="entry name" value="DNA_ligase_aden"/>
    <property type="match status" value="1"/>
</dbReference>
<dbReference type="Pfam" id="PF03120">
    <property type="entry name" value="DNA_ligase_OB"/>
    <property type="match status" value="1"/>
</dbReference>
<dbReference type="Pfam" id="PF12826">
    <property type="entry name" value="HHH_2"/>
    <property type="match status" value="1"/>
</dbReference>
<dbReference type="Pfam" id="PF14520">
    <property type="entry name" value="HHH_5"/>
    <property type="match status" value="1"/>
</dbReference>
<dbReference type="PIRSF" id="PIRSF001604">
    <property type="entry name" value="LigA"/>
    <property type="match status" value="1"/>
</dbReference>
<dbReference type="SMART" id="SM00292">
    <property type="entry name" value="BRCT"/>
    <property type="match status" value="1"/>
</dbReference>
<dbReference type="SMART" id="SM00278">
    <property type="entry name" value="HhH1"/>
    <property type="match status" value="3"/>
</dbReference>
<dbReference type="SMART" id="SM00532">
    <property type="entry name" value="LIGANc"/>
    <property type="match status" value="1"/>
</dbReference>
<dbReference type="SUPFAM" id="SSF52113">
    <property type="entry name" value="BRCT domain"/>
    <property type="match status" value="1"/>
</dbReference>
<dbReference type="SUPFAM" id="SSF56091">
    <property type="entry name" value="DNA ligase/mRNA capping enzyme, catalytic domain"/>
    <property type="match status" value="1"/>
</dbReference>
<dbReference type="SUPFAM" id="SSF50249">
    <property type="entry name" value="Nucleic acid-binding proteins"/>
    <property type="match status" value="1"/>
</dbReference>
<dbReference type="SUPFAM" id="SSF47781">
    <property type="entry name" value="RuvA domain 2-like"/>
    <property type="match status" value="1"/>
</dbReference>
<dbReference type="PROSITE" id="PS50172">
    <property type="entry name" value="BRCT"/>
    <property type="match status" value="1"/>
</dbReference>
<dbReference type="PROSITE" id="PS01055">
    <property type="entry name" value="DNA_LIGASE_N1"/>
    <property type="match status" value="1"/>
</dbReference>
<dbReference type="PROSITE" id="PS01056">
    <property type="entry name" value="DNA_LIGASE_N2"/>
    <property type="match status" value="1"/>
</dbReference>
<accession>O84148</accession>
<reference key="1">
    <citation type="journal article" date="1998" name="Science">
        <title>Genome sequence of an obligate intracellular pathogen of humans: Chlamydia trachomatis.</title>
        <authorList>
            <person name="Stephens R.S."/>
            <person name="Kalman S."/>
            <person name="Lammel C.J."/>
            <person name="Fan J."/>
            <person name="Marathe R."/>
            <person name="Aravind L."/>
            <person name="Mitchell W.P."/>
            <person name="Olinger L."/>
            <person name="Tatusov R.L."/>
            <person name="Zhao Q."/>
            <person name="Koonin E.V."/>
            <person name="Davis R.W."/>
        </authorList>
    </citation>
    <scope>NUCLEOTIDE SEQUENCE [LARGE SCALE GENOMIC DNA]</scope>
    <source>
        <strain>ATCC VR-885 / DSM 19411 / UW-3/Cx</strain>
    </source>
</reference>
<gene>
    <name evidence="1" type="primary">ligA</name>
    <name type="ordered locus">CT_146</name>
</gene>
<evidence type="ECO:0000255" key="1">
    <source>
        <dbReference type="HAMAP-Rule" id="MF_01588"/>
    </source>
</evidence>
<organism>
    <name type="scientific">Chlamydia trachomatis serovar D (strain ATCC VR-885 / DSM 19411 / UW-3/Cx)</name>
    <dbReference type="NCBI Taxonomy" id="272561"/>
    <lineage>
        <taxon>Bacteria</taxon>
        <taxon>Pseudomonadati</taxon>
        <taxon>Chlamydiota</taxon>
        <taxon>Chlamydiia</taxon>
        <taxon>Chlamydiales</taxon>
        <taxon>Chlamydiaceae</taxon>
        <taxon>Chlamydia/Chlamydophila group</taxon>
        <taxon>Chlamydia</taxon>
    </lineage>
</organism>
<name>DNLJ_CHLTR</name>
<keyword id="KW-0227">DNA damage</keyword>
<keyword id="KW-0234">DNA repair</keyword>
<keyword id="KW-0235">DNA replication</keyword>
<keyword id="KW-0436">Ligase</keyword>
<keyword id="KW-0460">Magnesium</keyword>
<keyword id="KW-0464">Manganese</keyword>
<keyword id="KW-0479">Metal-binding</keyword>
<keyword id="KW-0520">NAD</keyword>
<keyword id="KW-1185">Reference proteome</keyword>
<keyword id="KW-0862">Zinc</keyword>
<feature type="chain" id="PRO_0000161744" description="DNA ligase">
    <location>
        <begin position="1"/>
        <end position="663"/>
    </location>
</feature>
<feature type="domain" description="BRCT" evidence="1">
    <location>
        <begin position="581"/>
        <end position="663"/>
    </location>
</feature>
<feature type="active site" description="N6-AMP-lysine intermediate" evidence="1">
    <location>
        <position position="114"/>
    </location>
</feature>
<feature type="binding site" evidence="1">
    <location>
        <begin position="33"/>
        <end position="37"/>
    </location>
    <ligand>
        <name>NAD(+)</name>
        <dbReference type="ChEBI" id="CHEBI:57540"/>
    </ligand>
</feature>
<feature type="binding site" evidence="1">
    <location>
        <begin position="82"/>
        <end position="83"/>
    </location>
    <ligand>
        <name>NAD(+)</name>
        <dbReference type="ChEBI" id="CHEBI:57540"/>
    </ligand>
</feature>
<feature type="binding site" evidence="1">
    <location>
        <position position="112"/>
    </location>
    <ligand>
        <name>NAD(+)</name>
        <dbReference type="ChEBI" id="CHEBI:57540"/>
    </ligand>
</feature>
<feature type="binding site" evidence="1">
    <location>
        <position position="135"/>
    </location>
    <ligand>
        <name>NAD(+)</name>
        <dbReference type="ChEBI" id="CHEBI:57540"/>
    </ligand>
</feature>
<feature type="binding site" evidence="1">
    <location>
        <position position="171"/>
    </location>
    <ligand>
        <name>NAD(+)</name>
        <dbReference type="ChEBI" id="CHEBI:57540"/>
    </ligand>
</feature>
<feature type="binding site" evidence="1">
    <location>
        <position position="285"/>
    </location>
    <ligand>
        <name>NAD(+)</name>
        <dbReference type="ChEBI" id="CHEBI:57540"/>
    </ligand>
</feature>
<feature type="binding site" evidence="1">
    <location>
        <position position="309"/>
    </location>
    <ligand>
        <name>NAD(+)</name>
        <dbReference type="ChEBI" id="CHEBI:57540"/>
    </ligand>
</feature>
<feature type="binding site" evidence="1">
    <location>
        <position position="403"/>
    </location>
    <ligand>
        <name>Zn(2+)</name>
        <dbReference type="ChEBI" id="CHEBI:29105"/>
    </ligand>
</feature>
<feature type="binding site" evidence="1">
    <location>
        <position position="406"/>
    </location>
    <ligand>
        <name>Zn(2+)</name>
        <dbReference type="ChEBI" id="CHEBI:29105"/>
    </ligand>
</feature>
<feature type="binding site" evidence="1">
    <location>
        <position position="419"/>
    </location>
    <ligand>
        <name>Zn(2+)</name>
        <dbReference type="ChEBI" id="CHEBI:29105"/>
    </ligand>
</feature>
<feature type="binding site" evidence="1">
    <location>
        <position position="424"/>
    </location>
    <ligand>
        <name>Zn(2+)</name>
        <dbReference type="ChEBI" id="CHEBI:29105"/>
    </ligand>
</feature>